<protein>
    <recommendedName>
        <fullName>Putative zinc metalloprotease RSc1411</fullName>
        <ecNumber>3.4.24.-</ecNumber>
    </recommendedName>
</protein>
<proteinExistence type="inferred from homology"/>
<accession>Q8XZI4</accession>
<dbReference type="EC" id="3.4.24.-"/>
<dbReference type="EMBL" id="AL646052">
    <property type="protein sequence ID" value="CAD15113.1"/>
    <property type="molecule type" value="Genomic_DNA"/>
</dbReference>
<dbReference type="RefSeq" id="WP_011001360.1">
    <property type="nucleotide sequence ID" value="NC_003295.1"/>
</dbReference>
<dbReference type="SMR" id="Q8XZI4"/>
<dbReference type="STRING" id="267608.RSc1411"/>
<dbReference type="EnsemblBacteria" id="CAD15113">
    <property type="protein sequence ID" value="CAD15113"/>
    <property type="gene ID" value="RSc1411"/>
</dbReference>
<dbReference type="KEGG" id="rso:RSc1411"/>
<dbReference type="PATRIC" id="fig|267608.8.peg.1442"/>
<dbReference type="eggNOG" id="COG0750">
    <property type="taxonomic scope" value="Bacteria"/>
</dbReference>
<dbReference type="HOGENOM" id="CLU_025778_0_1_4"/>
<dbReference type="Proteomes" id="UP000001436">
    <property type="component" value="Chromosome"/>
</dbReference>
<dbReference type="GO" id="GO:0005886">
    <property type="term" value="C:plasma membrane"/>
    <property type="evidence" value="ECO:0007669"/>
    <property type="project" value="UniProtKB-SubCell"/>
</dbReference>
<dbReference type="GO" id="GO:0046872">
    <property type="term" value="F:metal ion binding"/>
    <property type="evidence" value="ECO:0007669"/>
    <property type="project" value="UniProtKB-KW"/>
</dbReference>
<dbReference type="GO" id="GO:0004222">
    <property type="term" value="F:metalloendopeptidase activity"/>
    <property type="evidence" value="ECO:0007669"/>
    <property type="project" value="InterPro"/>
</dbReference>
<dbReference type="GO" id="GO:0006508">
    <property type="term" value="P:proteolysis"/>
    <property type="evidence" value="ECO:0007669"/>
    <property type="project" value="UniProtKB-KW"/>
</dbReference>
<dbReference type="CDD" id="cd06163">
    <property type="entry name" value="S2P-M50_PDZ_RseP-like"/>
    <property type="match status" value="1"/>
</dbReference>
<dbReference type="Gene3D" id="2.30.42.10">
    <property type="match status" value="2"/>
</dbReference>
<dbReference type="InterPro" id="IPR001478">
    <property type="entry name" value="PDZ"/>
</dbReference>
<dbReference type="InterPro" id="IPR041489">
    <property type="entry name" value="PDZ_6"/>
</dbReference>
<dbReference type="InterPro" id="IPR036034">
    <property type="entry name" value="PDZ_sf"/>
</dbReference>
<dbReference type="InterPro" id="IPR004387">
    <property type="entry name" value="Pept_M50_Zn"/>
</dbReference>
<dbReference type="InterPro" id="IPR008915">
    <property type="entry name" value="Peptidase_M50"/>
</dbReference>
<dbReference type="NCBIfam" id="TIGR00054">
    <property type="entry name" value="RIP metalloprotease RseP"/>
    <property type="match status" value="1"/>
</dbReference>
<dbReference type="PANTHER" id="PTHR42837:SF2">
    <property type="entry name" value="MEMBRANE METALLOPROTEASE ARASP2, CHLOROPLASTIC-RELATED"/>
    <property type="match status" value="1"/>
</dbReference>
<dbReference type="PANTHER" id="PTHR42837">
    <property type="entry name" value="REGULATOR OF SIGMA-E PROTEASE RSEP"/>
    <property type="match status" value="1"/>
</dbReference>
<dbReference type="Pfam" id="PF17820">
    <property type="entry name" value="PDZ_6"/>
    <property type="match status" value="1"/>
</dbReference>
<dbReference type="Pfam" id="PF02163">
    <property type="entry name" value="Peptidase_M50"/>
    <property type="match status" value="1"/>
</dbReference>
<dbReference type="SMART" id="SM00228">
    <property type="entry name" value="PDZ"/>
    <property type="match status" value="1"/>
</dbReference>
<dbReference type="SUPFAM" id="SSF50156">
    <property type="entry name" value="PDZ domain-like"/>
    <property type="match status" value="2"/>
</dbReference>
<dbReference type="PROSITE" id="PS50106">
    <property type="entry name" value="PDZ"/>
    <property type="match status" value="1"/>
</dbReference>
<dbReference type="PROSITE" id="PS00142">
    <property type="entry name" value="ZINC_PROTEASE"/>
    <property type="match status" value="1"/>
</dbReference>
<organism>
    <name type="scientific">Ralstonia nicotianae (strain ATCC BAA-1114 / GMI1000)</name>
    <name type="common">Ralstonia solanacearum</name>
    <dbReference type="NCBI Taxonomy" id="267608"/>
    <lineage>
        <taxon>Bacteria</taxon>
        <taxon>Pseudomonadati</taxon>
        <taxon>Pseudomonadota</taxon>
        <taxon>Betaproteobacteria</taxon>
        <taxon>Burkholderiales</taxon>
        <taxon>Burkholderiaceae</taxon>
        <taxon>Ralstonia</taxon>
        <taxon>Ralstonia solanacearum species complex</taxon>
    </lineage>
</organism>
<feature type="chain" id="PRO_0000088454" description="Putative zinc metalloprotease RSc1411">
    <location>
        <begin position="1"/>
        <end position="462"/>
    </location>
</feature>
<feature type="transmembrane region" description="Helical" evidence="2">
    <location>
        <begin position="1"/>
        <end position="21"/>
    </location>
</feature>
<feature type="transmembrane region" description="Helical" evidence="2">
    <location>
        <begin position="102"/>
        <end position="124"/>
    </location>
</feature>
<feature type="transmembrane region" description="Helical" evidence="2">
    <location>
        <begin position="386"/>
        <end position="406"/>
    </location>
</feature>
<feature type="transmembrane region" description="Helical" evidence="2">
    <location>
        <begin position="430"/>
        <end position="450"/>
    </location>
</feature>
<feature type="domain" description="PDZ" evidence="3">
    <location>
        <begin position="201"/>
        <end position="283"/>
    </location>
</feature>
<feature type="active site" evidence="4">
    <location>
        <position position="19"/>
    </location>
</feature>
<feature type="binding site" evidence="4">
    <location>
        <position position="18"/>
    </location>
    <ligand>
        <name>Zn(2+)</name>
        <dbReference type="ChEBI" id="CHEBI:29105"/>
        <note>catalytic</note>
    </ligand>
</feature>
<feature type="binding site" evidence="4">
    <location>
        <position position="22"/>
    </location>
    <ligand>
        <name>Zn(2+)</name>
        <dbReference type="ChEBI" id="CHEBI:29105"/>
        <note>catalytic</note>
    </ligand>
</feature>
<name>Y1411_RALN1</name>
<evidence type="ECO:0000250" key="1"/>
<evidence type="ECO:0000255" key="2"/>
<evidence type="ECO:0000255" key="3">
    <source>
        <dbReference type="PROSITE-ProRule" id="PRU00143"/>
    </source>
</evidence>
<evidence type="ECO:0000255" key="4">
    <source>
        <dbReference type="PROSITE-ProRule" id="PRU10095"/>
    </source>
</evidence>
<evidence type="ECO:0000305" key="5"/>
<gene>
    <name type="ordered locus">RSc1411</name>
    <name type="ORF">RS05281</name>
</gene>
<reference key="1">
    <citation type="journal article" date="2002" name="Nature">
        <title>Genome sequence of the plant pathogen Ralstonia solanacearum.</title>
        <authorList>
            <person name="Salanoubat M."/>
            <person name="Genin S."/>
            <person name="Artiguenave F."/>
            <person name="Gouzy J."/>
            <person name="Mangenot S."/>
            <person name="Arlat M."/>
            <person name="Billault A."/>
            <person name="Brottier P."/>
            <person name="Camus J.-C."/>
            <person name="Cattolico L."/>
            <person name="Chandler M."/>
            <person name="Choisne N."/>
            <person name="Claudel-Renard C."/>
            <person name="Cunnac S."/>
            <person name="Demange N."/>
            <person name="Gaspin C."/>
            <person name="Lavie M."/>
            <person name="Moisan A."/>
            <person name="Robert C."/>
            <person name="Saurin W."/>
            <person name="Schiex T."/>
            <person name="Siguier P."/>
            <person name="Thebault P."/>
            <person name="Whalen M."/>
            <person name="Wincker P."/>
            <person name="Levy M."/>
            <person name="Weissenbach J."/>
            <person name="Boucher C.A."/>
        </authorList>
    </citation>
    <scope>NUCLEOTIDE SEQUENCE [LARGE SCALE GENOMIC DNA]</scope>
    <source>
        <strain>ATCC BAA-1114 / GMI1000</strain>
    </source>
</reference>
<keyword id="KW-0997">Cell inner membrane</keyword>
<keyword id="KW-1003">Cell membrane</keyword>
<keyword id="KW-0378">Hydrolase</keyword>
<keyword id="KW-0472">Membrane</keyword>
<keyword id="KW-0479">Metal-binding</keyword>
<keyword id="KW-0482">Metalloprotease</keyword>
<keyword id="KW-0645">Protease</keyword>
<keyword id="KW-1185">Reference proteome</keyword>
<keyword id="KW-0812">Transmembrane</keyword>
<keyword id="KW-1133">Transmembrane helix</keyword>
<keyword id="KW-0862">Zinc</keyword>
<comment type="cofactor">
    <cofactor evidence="5">
        <name>Zn(2+)</name>
        <dbReference type="ChEBI" id="CHEBI:29105"/>
    </cofactor>
</comment>
<comment type="subcellular location">
    <subcellularLocation>
        <location evidence="1">Cell inner membrane</location>
        <topology evidence="1">Multi-pass membrane protein</topology>
    </subcellularLocation>
</comment>
<comment type="similarity">
    <text evidence="5">Belongs to the peptidase M50B family.</text>
</comment>
<sequence length="462" mass="49614">MLTVLAFVFAIAVLIVVHELGHYSVARLCGVKVLRFSVGFGKVLFRRVGRGPDRTEWTLCAIPLGGYVKMLGESARDPERDPPIPPEDLPRTFDHQPVYKRFAIVAAGPVFNFLLAIALYALLAWVGAQEPLPILGAPPPGSIAAQADLRAKDRVVAVGTDEEAPTPVRAWSDVRMRLYEAGIGGRDAIVQVRGADGAERTVRLRELPSAARSPQVDVIEQVGLRLLGGPVTIAEVLPGSAGERAGLRRGDQIVRFAGQPADQASDLIRWIRAMPEQNASIDILRDGLPMTLPVRLGADADSANPGGPKLGKLGAQLSQHVETELIRDEPVHALGHAMREVWRTSMLSLKVLGKMIVGQASLQNLSGPITVADFAGKAASLGWQSFVAFLALISVSLGVLNLLPVPVLDGGHLLYYCVEFLTGKPVPESWQAVLQKIGIACILLLTSLALYNDLSRLFLAHG</sequence>